<organism>
    <name type="scientific">Acinetobacter baumannii (strain AB0057)</name>
    <dbReference type="NCBI Taxonomy" id="480119"/>
    <lineage>
        <taxon>Bacteria</taxon>
        <taxon>Pseudomonadati</taxon>
        <taxon>Pseudomonadota</taxon>
        <taxon>Gammaproteobacteria</taxon>
        <taxon>Moraxellales</taxon>
        <taxon>Moraxellaceae</taxon>
        <taxon>Acinetobacter</taxon>
        <taxon>Acinetobacter calcoaceticus/baumannii complex</taxon>
    </lineage>
</organism>
<gene>
    <name evidence="1" type="primary">aroQ</name>
    <name type="ordered locus">AB57_2358</name>
</gene>
<protein>
    <recommendedName>
        <fullName evidence="1">3-dehydroquinate dehydratase</fullName>
        <shortName evidence="1">3-dehydroquinase</shortName>
        <ecNumber evidence="1">4.2.1.10</ecNumber>
    </recommendedName>
    <alternativeName>
        <fullName evidence="1">Type II DHQase</fullName>
    </alternativeName>
</protein>
<feature type="chain" id="PRO_1000118270" description="3-dehydroquinate dehydratase">
    <location>
        <begin position="1"/>
        <end position="151"/>
    </location>
</feature>
<feature type="active site" description="Proton acceptor" evidence="1">
    <location>
        <position position="24"/>
    </location>
</feature>
<feature type="active site" description="Proton donor" evidence="1">
    <location>
        <position position="102"/>
    </location>
</feature>
<feature type="binding site" evidence="1">
    <location>
        <position position="76"/>
    </location>
    <ligand>
        <name>substrate</name>
    </ligand>
</feature>
<feature type="binding site" evidence="1">
    <location>
        <position position="82"/>
    </location>
    <ligand>
        <name>substrate</name>
    </ligand>
</feature>
<feature type="binding site" evidence="1">
    <location>
        <position position="89"/>
    </location>
    <ligand>
        <name>substrate</name>
    </ligand>
</feature>
<feature type="binding site" evidence="1">
    <location>
        <begin position="103"/>
        <end position="104"/>
    </location>
    <ligand>
        <name>substrate</name>
    </ligand>
</feature>
<feature type="binding site" evidence="1">
    <location>
        <position position="113"/>
    </location>
    <ligand>
        <name>substrate</name>
    </ligand>
</feature>
<feature type="site" description="Transition state stabilizer" evidence="1">
    <location>
        <position position="19"/>
    </location>
</feature>
<reference key="1">
    <citation type="journal article" date="2008" name="J. Bacteriol.">
        <title>Comparative genome sequence analysis of multidrug-resistant Acinetobacter baumannii.</title>
        <authorList>
            <person name="Adams M.D."/>
            <person name="Goglin K."/>
            <person name="Molyneaux N."/>
            <person name="Hujer K.M."/>
            <person name="Lavender H."/>
            <person name="Jamison J.J."/>
            <person name="MacDonald I.J."/>
            <person name="Martin K.M."/>
            <person name="Russo T."/>
            <person name="Campagnari A.A."/>
            <person name="Hujer A.M."/>
            <person name="Bonomo R.A."/>
            <person name="Gill S.R."/>
        </authorList>
    </citation>
    <scope>NUCLEOTIDE SEQUENCE [LARGE SCALE GENOMIC DNA]</scope>
    <source>
        <strain>AB0057</strain>
    </source>
</reference>
<sequence>MSSTILVIHGPNLNLLGKREPEVYGHLTLDNINQQLIAQAEQASITLDTFQSNWEGAIVDRIHQAQTEGVKLIIINPAALTHTSVALRDALLGVAIPFIEVHLSNVHAREAFRHHSYLSDKAIGVICGLGAKGYSFALDYAIEKIQPSNPN</sequence>
<dbReference type="EC" id="4.2.1.10" evidence="1"/>
<dbReference type="EMBL" id="CP001182">
    <property type="protein sequence ID" value="ACJ42472.1"/>
    <property type="molecule type" value="Genomic_DNA"/>
</dbReference>
<dbReference type="RefSeq" id="WP_000099412.1">
    <property type="nucleotide sequence ID" value="NC_011586.2"/>
</dbReference>
<dbReference type="SMR" id="B7I9Y9"/>
<dbReference type="GeneID" id="92894274"/>
<dbReference type="KEGG" id="abn:AB57_2358"/>
<dbReference type="HOGENOM" id="CLU_090968_1_0_6"/>
<dbReference type="UniPathway" id="UPA00053">
    <property type="reaction ID" value="UER00086"/>
</dbReference>
<dbReference type="Proteomes" id="UP000007094">
    <property type="component" value="Chromosome"/>
</dbReference>
<dbReference type="GO" id="GO:0003855">
    <property type="term" value="F:3-dehydroquinate dehydratase activity"/>
    <property type="evidence" value="ECO:0007669"/>
    <property type="project" value="UniProtKB-UniRule"/>
</dbReference>
<dbReference type="GO" id="GO:0008652">
    <property type="term" value="P:amino acid biosynthetic process"/>
    <property type="evidence" value="ECO:0007669"/>
    <property type="project" value="UniProtKB-KW"/>
</dbReference>
<dbReference type="GO" id="GO:0009073">
    <property type="term" value="P:aromatic amino acid family biosynthetic process"/>
    <property type="evidence" value="ECO:0007669"/>
    <property type="project" value="UniProtKB-KW"/>
</dbReference>
<dbReference type="GO" id="GO:0009423">
    <property type="term" value="P:chorismate biosynthetic process"/>
    <property type="evidence" value="ECO:0007669"/>
    <property type="project" value="UniProtKB-UniRule"/>
</dbReference>
<dbReference type="GO" id="GO:0019631">
    <property type="term" value="P:quinate catabolic process"/>
    <property type="evidence" value="ECO:0007669"/>
    <property type="project" value="TreeGrafter"/>
</dbReference>
<dbReference type="CDD" id="cd00466">
    <property type="entry name" value="DHQase_II"/>
    <property type="match status" value="1"/>
</dbReference>
<dbReference type="Gene3D" id="3.40.50.9100">
    <property type="entry name" value="Dehydroquinase, class II"/>
    <property type="match status" value="1"/>
</dbReference>
<dbReference type="HAMAP" id="MF_00169">
    <property type="entry name" value="AroQ"/>
    <property type="match status" value="1"/>
</dbReference>
<dbReference type="InterPro" id="IPR001874">
    <property type="entry name" value="DHquinase_II"/>
</dbReference>
<dbReference type="InterPro" id="IPR018509">
    <property type="entry name" value="DHquinase_II_CS"/>
</dbReference>
<dbReference type="InterPro" id="IPR036441">
    <property type="entry name" value="DHquinase_II_sf"/>
</dbReference>
<dbReference type="NCBIfam" id="TIGR01088">
    <property type="entry name" value="aroQ"/>
    <property type="match status" value="1"/>
</dbReference>
<dbReference type="NCBIfam" id="NF003804">
    <property type="entry name" value="PRK05395.1-1"/>
    <property type="match status" value="1"/>
</dbReference>
<dbReference type="NCBIfam" id="NF003805">
    <property type="entry name" value="PRK05395.1-2"/>
    <property type="match status" value="1"/>
</dbReference>
<dbReference type="NCBIfam" id="NF003806">
    <property type="entry name" value="PRK05395.1-3"/>
    <property type="match status" value="1"/>
</dbReference>
<dbReference type="NCBIfam" id="NF003807">
    <property type="entry name" value="PRK05395.1-4"/>
    <property type="match status" value="1"/>
</dbReference>
<dbReference type="PANTHER" id="PTHR21272">
    <property type="entry name" value="CATABOLIC 3-DEHYDROQUINASE"/>
    <property type="match status" value="1"/>
</dbReference>
<dbReference type="PANTHER" id="PTHR21272:SF3">
    <property type="entry name" value="CATABOLIC 3-DEHYDROQUINASE"/>
    <property type="match status" value="1"/>
</dbReference>
<dbReference type="Pfam" id="PF01220">
    <property type="entry name" value="DHquinase_II"/>
    <property type="match status" value="1"/>
</dbReference>
<dbReference type="PIRSF" id="PIRSF001399">
    <property type="entry name" value="DHquinase_II"/>
    <property type="match status" value="1"/>
</dbReference>
<dbReference type="SUPFAM" id="SSF52304">
    <property type="entry name" value="Type II 3-dehydroquinate dehydratase"/>
    <property type="match status" value="1"/>
</dbReference>
<dbReference type="PROSITE" id="PS01029">
    <property type="entry name" value="DEHYDROQUINASE_II"/>
    <property type="match status" value="1"/>
</dbReference>
<keyword id="KW-0028">Amino-acid biosynthesis</keyword>
<keyword id="KW-0057">Aromatic amino acid biosynthesis</keyword>
<keyword id="KW-0456">Lyase</keyword>
<proteinExistence type="inferred from homology"/>
<accession>B7I9Y9</accession>
<comment type="function">
    <text evidence="1">Catalyzes a trans-dehydration via an enolate intermediate.</text>
</comment>
<comment type="catalytic activity">
    <reaction evidence="1">
        <text>3-dehydroquinate = 3-dehydroshikimate + H2O</text>
        <dbReference type="Rhea" id="RHEA:21096"/>
        <dbReference type="ChEBI" id="CHEBI:15377"/>
        <dbReference type="ChEBI" id="CHEBI:16630"/>
        <dbReference type="ChEBI" id="CHEBI:32364"/>
        <dbReference type="EC" id="4.2.1.10"/>
    </reaction>
</comment>
<comment type="pathway">
    <text evidence="1">Metabolic intermediate biosynthesis; chorismate biosynthesis; chorismate from D-erythrose 4-phosphate and phosphoenolpyruvate: step 3/7.</text>
</comment>
<comment type="subunit">
    <text evidence="1">Homododecamer.</text>
</comment>
<comment type="similarity">
    <text evidence="1">Belongs to the type-II 3-dehydroquinase family.</text>
</comment>
<evidence type="ECO:0000255" key="1">
    <source>
        <dbReference type="HAMAP-Rule" id="MF_00169"/>
    </source>
</evidence>
<name>AROQ_ACIB5</name>